<evidence type="ECO:0000250" key="1">
    <source>
        <dbReference type="UniProtKB" id="O14113"/>
    </source>
</evidence>
<evidence type="ECO:0000250" key="2">
    <source>
        <dbReference type="UniProtKB" id="Q5BJN8"/>
    </source>
</evidence>
<evidence type="ECO:0000250" key="3">
    <source>
        <dbReference type="UniProtKB" id="Q8K1J5"/>
    </source>
</evidence>
<evidence type="ECO:0000255" key="4"/>
<evidence type="ECO:0000256" key="5">
    <source>
        <dbReference type="SAM" id="MobiDB-lite"/>
    </source>
</evidence>
<evidence type="ECO:0000269" key="6">
    <source>
    </source>
</evidence>
<evidence type="ECO:0000269" key="7">
    <source>
    </source>
</evidence>
<evidence type="ECO:0000269" key="8">
    <source>
    </source>
</evidence>
<evidence type="ECO:0000303" key="9">
    <source>
    </source>
</evidence>
<evidence type="ECO:0000305" key="10"/>
<evidence type="ECO:0000305" key="11">
    <source>
    </source>
</evidence>
<evidence type="ECO:0000305" key="12">
    <source>
    </source>
</evidence>
<evidence type="ECO:0007744" key="13">
    <source>
    </source>
</evidence>
<evidence type="ECO:0007744" key="14">
    <source>
    </source>
</evidence>
<evidence type="ECO:0007744" key="15">
    <source>
    </source>
</evidence>
<evidence type="ECO:0007744" key="16">
    <source>
    </source>
</evidence>
<evidence type="ECO:0007744" key="17">
    <source>
    </source>
</evidence>
<evidence type="ECO:0007829" key="18">
    <source>
        <dbReference type="PDB" id="7N99"/>
    </source>
</evidence>
<gene>
    <name type="primary">SDE2</name>
    <name type="synonym">C1orf55</name>
</gene>
<organism>
    <name type="scientific">Homo sapiens</name>
    <name type="common">Human</name>
    <dbReference type="NCBI Taxonomy" id="9606"/>
    <lineage>
        <taxon>Eukaryota</taxon>
        <taxon>Metazoa</taxon>
        <taxon>Chordata</taxon>
        <taxon>Craniata</taxon>
        <taxon>Vertebrata</taxon>
        <taxon>Euteleostomi</taxon>
        <taxon>Mammalia</taxon>
        <taxon>Eutheria</taxon>
        <taxon>Euarchontoglires</taxon>
        <taxon>Primates</taxon>
        <taxon>Haplorrhini</taxon>
        <taxon>Catarrhini</taxon>
        <taxon>Hominidae</taxon>
        <taxon>Homo</taxon>
    </lineage>
</organism>
<accession>Q6IQ49</accession>
<accession>A8K4P3</accession>
<accession>Q5TD36</accession>
<accession>Q6ZS26</accession>
<accession>Q8NAG7</accession>
<reference key="1">
    <citation type="journal article" date="2004" name="Nat. Genet.">
        <title>Complete sequencing and characterization of 21,243 full-length human cDNAs.</title>
        <authorList>
            <person name="Ota T."/>
            <person name="Suzuki Y."/>
            <person name="Nishikawa T."/>
            <person name="Otsuki T."/>
            <person name="Sugiyama T."/>
            <person name="Irie R."/>
            <person name="Wakamatsu A."/>
            <person name="Hayashi K."/>
            <person name="Sato H."/>
            <person name="Nagai K."/>
            <person name="Kimura K."/>
            <person name="Makita H."/>
            <person name="Sekine M."/>
            <person name="Obayashi M."/>
            <person name="Nishi T."/>
            <person name="Shibahara T."/>
            <person name="Tanaka T."/>
            <person name="Ishii S."/>
            <person name="Yamamoto J."/>
            <person name="Saito K."/>
            <person name="Kawai Y."/>
            <person name="Isono Y."/>
            <person name="Nakamura Y."/>
            <person name="Nagahari K."/>
            <person name="Murakami K."/>
            <person name="Yasuda T."/>
            <person name="Iwayanagi T."/>
            <person name="Wagatsuma M."/>
            <person name="Shiratori A."/>
            <person name="Sudo H."/>
            <person name="Hosoiri T."/>
            <person name="Kaku Y."/>
            <person name="Kodaira H."/>
            <person name="Kondo H."/>
            <person name="Sugawara M."/>
            <person name="Takahashi M."/>
            <person name="Kanda K."/>
            <person name="Yokoi T."/>
            <person name="Furuya T."/>
            <person name="Kikkawa E."/>
            <person name="Omura Y."/>
            <person name="Abe K."/>
            <person name="Kamihara K."/>
            <person name="Katsuta N."/>
            <person name="Sato K."/>
            <person name="Tanikawa M."/>
            <person name="Yamazaki M."/>
            <person name="Ninomiya K."/>
            <person name="Ishibashi T."/>
            <person name="Yamashita H."/>
            <person name="Murakawa K."/>
            <person name="Fujimori K."/>
            <person name="Tanai H."/>
            <person name="Kimata M."/>
            <person name="Watanabe M."/>
            <person name="Hiraoka S."/>
            <person name="Chiba Y."/>
            <person name="Ishida S."/>
            <person name="Ono Y."/>
            <person name="Takiguchi S."/>
            <person name="Watanabe S."/>
            <person name="Yosida M."/>
            <person name="Hotuta T."/>
            <person name="Kusano J."/>
            <person name="Kanehori K."/>
            <person name="Takahashi-Fujii A."/>
            <person name="Hara H."/>
            <person name="Tanase T.-O."/>
            <person name="Nomura Y."/>
            <person name="Togiya S."/>
            <person name="Komai F."/>
            <person name="Hara R."/>
            <person name="Takeuchi K."/>
            <person name="Arita M."/>
            <person name="Imose N."/>
            <person name="Musashino K."/>
            <person name="Yuuki H."/>
            <person name="Oshima A."/>
            <person name="Sasaki N."/>
            <person name="Aotsuka S."/>
            <person name="Yoshikawa Y."/>
            <person name="Matsunawa H."/>
            <person name="Ichihara T."/>
            <person name="Shiohata N."/>
            <person name="Sano S."/>
            <person name="Moriya S."/>
            <person name="Momiyama H."/>
            <person name="Satoh N."/>
            <person name="Takami S."/>
            <person name="Terashima Y."/>
            <person name="Suzuki O."/>
            <person name="Nakagawa S."/>
            <person name="Senoh A."/>
            <person name="Mizoguchi H."/>
            <person name="Goto Y."/>
            <person name="Shimizu F."/>
            <person name="Wakebe H."/>
            <person name="Hishigaki H."/>
            <person name="Watanabe T."/>
            <person name="Sugiyama A."/>
            <person name="Takemoto M."/>
            <person name="Kawakami B."/>
            <person name="Yamazaki M."/>
            <person name="Watanabe K."/>
            <person name="Kumagai A."/>
            <person name="Itakura S."/>
            <person name="Fukuzumi Y."/>
            <person name="Fujimori Y."/>
            <person name="Komiyama M."/>
            <person name="Tashiro H."/>
            <person name="Tanigami A."/>
            <person name="Fujiwara T."/>
            <person name="Ono T."/>
            <person name="Yamada K."/>
            <person name="Fujii Y."/>
            <person name="Ozaki K."/>
            <person name="Hirao M."/>
            <person name="Ohmori Y."/>
            <person name="Kawabata A."/>
            <person name="Hikiji T."/>
            <person name="Kobatake N."/>
            <person name="Inagaki H."/>
            <person name="Ikema Y."/>
            <person name="Okamoto S."/>
            <person name="Okitani R."/>
            <person name="Kawakami T."/>
            <person name="Noguchi S."/>
            <person name="Itoh T."/>
            <person name="Shigeta K."/>
            <person name="Senba T."/>
            <person name="Matsumura K."/>
            <person name="Nakajima Y."/>
            <person name="Mizuno T."/>
            <person name="Morinaga M."/>
            <person name="Sasaki M."/>
            <person name="Togashi T."/>
            <person name="Oyama M."/>
            <person name="Hata H."/>
            <person name="Watanabe M."/>
            <person name="Komatsu T."/>
            <person name="Mizushima-Sugano J."/>
            <person name="Satoh T."/>
            <person name="Shirai Y."/>
            <person name="Takahashi Y."/>
            <person name="Nakagawa K."/>
            <person name="Okumura K."/>
            <person name="Nagase T."/>
            <person name="Nomura N."/>
            <person name="Kikuchi H."/>
            <person name="Masuho Y."/>
            <person name="Yamashita R."/>
            <person name="Nakai K."/>
            <person name="Yada T."/>
            <person name="Nakamura Y."/>
            <person name="Ohara O."/>
            <person name="Isogai T."/>
            <person name="Sugano S."/>
        </authorList>
    </citation>
    <scope>NUCLEOTIDE SEQUENCE [LARGE SCALE MRNA] (ISOFORMS 1; 2 AND 3)</scope>
    <source>
        <tissue>Brain</tissue>
        <tissue>Skeletal muscle</tissue>
    </source>
</reference>
<reference key="2">
    <citation type="journal article" date="2006" name="Nature">
        <title>The DNA sequence and biological annotation of human chromosome 1.</title>
        <authorList>
            <person name="Gregory S.G."/>
            <person name="Barlow K.F."/>
            <person name="McLay K.E."/>
            <person name="Kaul R."/>
            <person name="Swarbreck D."/>
            <person name="Dunham A."/>
            <person name="Scott C.E."/>
            <person name="Howe K.L."/>
            <person name="Woodfine K."/>
            <person name="Spencer C.C.A."/>
            <person name="Jones M.C."/>
            <person name="Gillson C."/>
            <person name="Searle S."/>
            <person name="Zhou Y."/>
            <person name="Kokocinski F."/>
            <person name="McDonald L."/>
            <person name="Evans R."/>
            <person name="Phillips K."/>
            <person name="Atkinson A."/>
            <person name="Cooper R."/>
            <person name="Jones C."/>
            <person name="Hall R.E."/>
            <person name="Andrews T.D."/>
            <person name="Lloyd C."/>
            <person name="Ainscough R."/>
            <person name="Almeida J.P."/>
            <person name="Ambrose K.D."/>
            <person name="Anderson F."/>
            <person name="Andrew R.W."/>
            <person name="Ashwell R.I.S."/>
            <person name="Aubin K."/>
            <person name="Babbage A.K."/>
            <person name="Bagguley C.L."/>
            <person name="Bailey J."/>
            <person name="Beasley H."/>
            <person name="Bethel G."/>
            <person name="Bird C.P."/>
            <person name="Bray-Allen S."/>
            <person name="Brown J.Y."/>
            <person name="Brown A.J."/>
            <person name="Buckley D."/>
            <person name="Burton J."/>
            <person name="Bye J."/>
            <person name="Carder C."/>
            <person name="Chapman J.C."/>
            <person name="Clark S.Y."/>
            <person name="Clarke G."/>
            <person name="Clee C."/>
            <person name="Cobley V."/>
            <person name="Collier R.E."/>
            <person name="Corby N."/>
            <person name="Coville G.J."/>
            <person name="Davies J."/>
            <person name="Deadman R."/>
            <person name="Dunn M."/>
            <person name="Earthrowl M."/>
            <person name="Ellington A.G."/>
            <person name="Errington H."/>
            <person name="Frankish A."/>
            <person name="Frankland J."/>
            <person name="French L."/>
            <person name="Garner P."/>
            <person name="Garnett J."/>
            <person name="Gay L."/>
            <person name="Ghori M.R.J."/>
            <person name="Gibson R."/>
            <person name="Gilby L.M."/>
            <person name="Gillett W."/>
            <person name="Glithero R.J."/>
            <person name="Grafham D.V."/>
            <person name="Griffiths C."/>
            <person name="Griffiths-Jones S."/>
            <person name="Grocock R."/>
            <person name="Hammond S."/>
            <person name="Harrison E.S.I."/>
            <person name="Hart E."/>
            <person name="Haugen E."/>
            <person name="Heath P.D."/>
            <person name="Holmes S."/>
            <person name="Holt K."/>
            <person name="Howden P.J."/>
            <person name="Hunt A.R."/>
            <person name="Hunt S.E."/>
            <person name="Hunter G."/>
            <person name="Isherwood J."/>
            <person name="James R."/>
            <person name="Johnson C."/>
            <person name="Johnson D."/>
            <person name="Joy A."/>
            <person name="Kay M."/>
            <person name="Kershaw J.K."/>
            <person name="Kibukawa M."/>
            <person name="Kimberley A.M."/>
            <person name="King A."/>
            <person name="Knights A.J."/>
            <person name="Lad H."/>
            <person name="Laird G."/>
            <person name="Lawlor S."/>
            <person name="Leongamornlert D.A."/>
            <person name="Lloyd D.M."/>
            <person name="Loveland J."/>
            <person name="Lovell J."/>
            <person name="Lush M.J."/>
            <person name="Lyne R."/>
            <person name="Martin S."/>
            <person name="Mashreghi-Mohammadi M."/>
            <person name="Matthews L."/>
            <person name="Matthews N.S.W."/>
            <person name="McLaren S."/>
            <person name="Milne S."/>
            <person name="Mistry S."/>
            <person name="Moore M.J.F."/>
            <person name="Nickerson T."/>
            <person name="O'Dell C.N."/>
            <person name="Oliver K."/>
            <person name="Palmeiri A."/>
            <person name="Palmer S.A."/>
            <person name="Parker A."/>
            <person name="Patel D."/>
            <person name="Pearce A.V."/>
            <person name="Peck A.I."/>
            <person name="Pelan S."/>
            <person name="Phelps K."/>
            <person name="Phillimore B.J."/>
            <person name="Plumb R."/>
            <person name="Rajan J."/>
            <person name="Raymond C."/>
            <person name="Rouse G."/>
            <person name="Saenphimmachak C."/>
            <person name="Sehra H.K."/>
            <person name="Sheridan E."/>
            <person name="Shownkeen R."/>
            <person name="Sims S."/>
            <person name="Skuce C.D."/>
            <person name="Smith M."/>
            <person name="Steward C."/>
            <person name="Subramanian S."/>
            <person name="Sycamore N."/>
            <person name="Tracey A."/>
            <person name="Tromans A."/>
            <person name="Van Helmond Z."/>
            <person name="Wall M."/>
            <person name="Wallis J.M."/>
            <person name="White S."/>
            <person name="Whitehead S.L."/>
            <person name="Wilkinson J.E."/>
            <person name="Willey D.L."/>
            <person name="Williams H."/>
            <person name="Wilming L."/>
            <person name="Wray P.W."/>
            <person name="Wu Z."/>
            <person name="Coulson A."/>
            <person name="Vaudin M."/>
            <person name="Sulston J.E."/>
            <person name="Durbin R.M."/>
            <person name="Hubbard T."/>
            <person name="Wooster R."/>
            <person name="Dunham I."/>
            <person name="Carter N.P."/>
            <person name="McVean G."/>
            <person name="Ross M.T."/>
            <person name="Harrow J."/>
            <person name="Olson M.V."/>
            <person name="Beck S."/>
            <person name="Rogers J."/>
            <person name="Bentley D.R."/>
        </authorList>
    </citation>
    <scope>NUCLEOTIDE SEQUENCE [LARGE SCALE GENOMIC DNA]</scope>
</reference>
<reference key="3">
    <citation type="submission" date="2005-07" db="EMBL/GenBank/DDBJ databases">
        <authorList>
            <person name="Mural R.J."/>
            <person name="Istrail S."/>
            <person name="Sutton G.G."/>
            <person name="Florea L."/>
            <person name="Halpern A.L."/>
            <person name="Mobarry C.M."/>
            <person name="Lippert R."/>
            <person name="Walenz B."/>
            <person name="Shatkay H."/>
            <person name="Dew I."/>
            <person name="Miller J.R."/>
            <person name="Flanigan M.J."/>
            <person name="Edwards N.J."/>
            <person name="Bolanos R."/>
            <person name="Fasulo D."/>
            <person name="Halldorsson B.V."/>
            <person name="Hannenhalli S."/>
            <person name="Turner R."/>
            <person name="Yooseph S."/>
            <person name="Lu F."/>
            <person name="Nusskern D.R."/>
            <person name="Shue B.C."/>
            <person name="Zheng X.H."/>
            <person name="Zhong F."/>
            <person name="Delcher A.L."/>
            <person name="Huson D.H."/>
            <person name="Kravitz S.A."/>
            <person name="Mouchard L."/>
            <person name="Reinert K."/>
            <person name="Remington K.A."/>
            <person name="Clark A.G."/>
            <person name="Waterman M.S."/>
            <person name="Eichler E.E."/>
            <person name="Adams M.D."/>
            <person name="Hunkapiller M.W."/>
            <person name="Myers E.W."/>
            <person name="Venter J.C."/>
        </authorList>
    </citation>
    <scope>NUCLEOTIDE SEQUENCE [LARGE SCALE GENOMIC DNA]</scope>
</reference>
<reference key="4">
    <citation type="journal article" date="2004" name="Genome Res.">
        <title>The status, quality, and expansion of the NIH full-length cDNA project: the Mammalian Gene Collection (MGC).</title>
        <authorList>
            <consortium name="The MGC Project Team"/>
        </authorList>
    </citation>
    <scope>NUCLEOTIDE SEQUENCE [LARGE SCALE MRNA] (ISOFORM 1)</scope>
    <source>
        <tissue>Brain</tissue>
    </source>
</reference>
<reference key="5">
    <citation type="journal article" date="2007" name="Science">
        <title>ATM and ATR substrate analysis reveals extensive protein networks responsive to DNA damage.</title>
        <authorList>
            <person name="Matsuoka S."/>
            <person name="Ballif B.A."/>
            <person name="Smogorzewska A."/>
            <person name="McDonald E.R. III"/>
            <person name="Hurov K.E."/>
            <person name="Luo J."/>
            <person name="Bakalarski C.E."/>
            <person name="Zhao Z."/>
            <person name="Solimini N."/>
            <person name="Lerenthal Y."/>
            <person name="Shiloh Y."/>
            <person name="Gygi S.P."/>
            <person name="Elledge S.J."/>
        </authorList>
    </citation>
    <scope>PHOSPHORYLATION [LARGE SCALE ANALYSIS] AT THR-319</scope>
    <scope>IDENTIFICATION BY MASS SPECTROMETRY [LARGE SCALE ANALYSIS]</scope>
    <source>
        <tissue>Embryonic kidney</tissue>
    </source>
</reference>
<reference key="6">
    <citation type="journal article" date="2008" name="J. Proteome Res.">
        <title>Combining protein-based IMAC, peptide-based IMAC, and MudPIT for efficient phosphoproteomic analysis.</title>
        <authorList>
            <person name="Cantin G.T."/>
            <person name="Yi W."/>
            <person name="Lu B."/>
            <person name="Park S.K."/>
            <person name="Xu T."/>
            <person name="Lee J.-D."/>
            <person name="Yates J.R. III"/>
        </authorList>
    </citation>
    <scope>PHOSPHORYLATION [LARGE SCALE ANALYSIS] AT SER-278</scope>
    <scope>IDENTIFICATION BY MASS SPECTROMETRY [LARGE SCALE ANALYSIS]</scope>
    <source>
        <tissue>Cervix carcinoma</tissue>
    </source>
</reference>
<reference key="7">
    <citation type="journal article" date="2008" name="Proc. Natl. Acad. Sci. U.S.A.">
        <title>A quantitative atlas of mitotic phosphorylation.</title>
        <authorList>
            <person name="Dephoure N."/>
            <person name="Zhou C."/>
            <person name="Villen J."/>
            <person name="Beausoleil S.A."/>
            <person name="Bakalarski C.E."/>
            <person name="Elledge S.J."/>
            <person name="Gygi S.P."/>
        </authorList>
    </citation>
    <scope>PHOSPHORYLATION [LARGE SCALE ANALYSIS] AT SER-278</scope>
    <scope>IDENTIFICATION BY MASS SPECTROMETRY [LARGE SCALE ANALYSIS]</scope>
    <source>
        <tissue>Cervix carcinoma</tissue>
    </source>
</reference>
<reference key="8">
    <citation type="journal article" date="2009" name="Sci. Signal.">
        <title>Quantitative phosphoproteomic analysis of T cell receptor signaling reveals system-wide modulation of protein-protein interactions.</title>
        <authorList>
            <person name="Mayya V."/>
            <person name="Lundgren D.H."/>
            <person name="Hwang S.-I."/>
            <person name="Rezaul K."/>
            <person name="Wu L."/>
            <person name="Eng J.K."/>
            <person name="Rodionov V."/>
            <person name="Han D.K."/>
        </authorList>
    </citation>
    <scope>IDENTIFICATION BY MASS SPECTROMETRY [LARGE SCALE ANALYSIS]</scope>
    <source>
        <tissue>Leukemic T-cell</tissue>
    </source>
</reference>
<reference key="9">
    <citation type="journal article" date="2010" name="Sci. Signal.">
        <title>Quantitative phosphoproteomics reveals widespread full phosphorylation site occupancy during mitosis.</title>
        <authorList>
            <person name="Olsen J.V."/>
            <person name="Vermeulen M."/>
            <person name="Santamaria A."/>
            <person name="Kumar C."/>
            <person name="Miller M.L."/>
            <person name="Jensen L.J."/>
            <person name="Gnad F."/>
            <person name="Cox J."/>
            <person name="Jensen T.S."/>
            <person name="Nigg E.A."/>
            <person name="Brunak S."/>
            <person name="Mann M."/>
        </authorList>
    </citation>
    <scope>PHOSPHORYLATION [LARGE SCALE ANALYSIS] AT SER-278</scope>
    <scope>IDENTIFICATION BY MASS SPECTROMETRY [LARGE SCALE ANALYSIS]</scope>
    <source>
        <tissue>Cervix carcinoma</tissue>
    </source>
</reference>
<reference key="10">
    <citation type="journal article" date="2011" name="BMC Syst. Biol.">
        <title>Initial characterization of the human central proteome.</title>
        <authorList>
            <person name="Burkard T.R."/>
            <person name="Planyavsky M."/>
            <person name="Kaupe I."/>
            <person name="Breitwieser F.P."/>
            <person name="Buerckstuemmer T."/>
            <person name="Bennett K.L."/>
            <person name="Superti-Furga G."/>
            <person name="Colinge J."/>
        </authorList>
    </citation>
    <scope>IDENTIFICATION BY MASS SPECTROMETRY [LARGE SCALE ANALYSIS]</scope>
</reference>
<reference key="11">
    <citation type="journal article" date="2013" name="J. Proteome Res.">
        <title>Toward a comprehensive characterization of a human cancer cell phosphoproteome.</title>
        <authorList>
            <person name="Zhou H."/>
            <person name="Di Palma S."/>
            <person name="Preisinger C."/>
            <person name="Peng M."/>
            <person name="Polat A.N."/>
            <person name="Heck A.J."/>
            <person name="Mohammed S."/>
        </authorList>
    </citation>
    <scope>PHOSPHORYLATION [LARGE SCALE ANALYSIS] AT THR-274 AND SER-278</scope>
    <scope>IDENTIFICATION BY MASS SPECTROMETRY [LARGE SCALE ANALYSIS]</scope>
    <source>
        <tissue>Cervix carcinoma</tissue>
        <tissue>Erythroleukemia</tissue>
    </source>
</reference>
<reference key="12">
    <citation type="journal article" date="2014" name="J. Proteomics">
        <title>An enzyme assisted RP-RPLC approach for in-depth analysis of human liver phosphoproteome.</title>
        <authorList>
            <person name="Bian Y."/>
            <person name="Song C."/>
            <person name="Cheng K."/>
            <person name="Dong M."/>
            <person name="Wang F."/>
            <person name="Huang J."/>
            <person name="Sun D."/>
            <person name="Wang L."/>
            <person name="Ye M."/>
            <person name="Zou H."/>
        </authorList>
    </citation>
    <scope>IDENTIFICATION BY MASS SPECTROMETRY [LARGE SCALE ANALYSIS]</scope>
    <source>
        <tissue>Liver</tissue>
    </source>
</reference>
<reference key="13">
    <citation type="journal article" date="2016" name="PLoS Genet.">
        <title>PCNA-dependent cleavage and degradation of SDE2 regulates response to replication stress.</title>
        <authorList>
            <person name="Jo U."/>
            <person name="Cai W."/>
            <person name="Wang J."/>
            <person name="Kwon Y."/>
            <person name="D'Andrea A.D."/>
            <person name="Kim H."/>
        </authorList>
    </citation>
    <scope>FUNCTION</scope>
    <scope>INTERACTION WITH PCNA</scope>
    <scope>SUBCELLULAR LOCATION</scope>
    <scope>PIP-BOX DOMAIN</scope>
    <scope>SAP DOMAIN</scope>
    <scope>UBIQUITINATION</scope>
    <scope>PROTEOLYTIC CLEAVAGE AT GLY-77</scope>
    <scope>MUTAGENESIS OF 47-PHE--PHE-48 AND 76-GLY--GLY-77</scope>
</reference>
<reference key="14">
    <citation type="journal article" date="2018" name="EMBO J.">
        <title>Sde2 is an intron-specific pre-mRNA splicing regulator activated by ubiquitin-like processing.</title>
        <authorList>
            <person name="Thakran P."/>
            <person name="Pandit P.A."/>
            <person name="Datta S."/>
            <person name="Kolathur K.K."/>
            <person name="Pleiss J.A."/>
            <person name="Mishra S.K."/>
        </authorList>
    </citation>
    <scope>PROTEOLYTIC CLEAVAGE AT GLY-77</scope>
    <scope>MUTAGENESIS OF 76-GLY-GLY-77 AND LYS-78</scope>
</reference>
<reference key="15">
    <citation type="journal article" date="2021" name="Nucleic Acids Res.">
        <title>SDE2 is an essential gene required for ribosome biogenesis and the regulation of alternative splicing.</title>
        <authorList>
            <person name="Floro J."/>
            <person name="Dai A."/>
            <person name="Metzger A."/>
            <person name="Mora-Martin A."/>
            <person name="Ganem N.J."/>
            <person name="Cifuentes D."/>
            <person name="Wu C.S."/>
            <person name="Dalal J."/>
            <person name="Lyons S.M."/>
            <person name="Labadorf A."/>
            <person name="Flynn R.L."/>
        </authorList>
    </citation>
    <scope>FUNCTION</scope>
    <scope>INTERACTION WITH FBL; CACTIN; SF3B1 AND U2AF1</scope>
    <scope>SUBCELLULAR LOCATION</scope>
    <scope>TISSUE SPECIFICITY</scope>
</reference>
<comment type="function">
    <text evidence="6">Inhibits translesion DNA synthesis by preventing monoubiquitination of PCNA, this is necessary to counteract damage due to ultraviolet light-induced replication stress (PubMed:27906959). SDE2 is cleaved following PCNA binding, and its complete degradation is necessary to allow S-phase progression following DNA damage (PubMed:27906959).</text>
</comment>
<comment type="function">
    <text evidence="1 8">Plays a role in pre-mRNA splicing by facilitating excision of relatively short introns featuring weak 3'-splice sites (ss) and high GC content (PubMed:34365507). May recruit CACTIN to the spliceosome (By similarity).</text>
</comment>
<comment type="function">
    <text evidence="8">Plays a role in ribosome biogenesis by enabling SNORD3- and SNORD118-dependent cleavage of the 47S rRNA precursor (PubMed:34365507). Binds ncRNA (non-coding RNA) including the snoRNAs SNORD3 and SNORD118 (PubMed:34365507).</text>
</comment>
<comment type="subunit">
    <text evidence="6 8">Interacts (via PIP-box) with PCNA; the interaction is direct and prevents ultraviolet light induced monoubiquitination of PCNA (PubMed:27906959). Interacts with FBL/fibrillarin (PubMed:34365507). Interacts with CACTIN (PubMed:34365507). Interacts with SF3B1 (PubMed:34365507). Interacts with U2AF1 (PubMed:34365507).</text>
</comment>
<comment type="interaction">
    <interactant intactId="EBI-2362709">
        <id>Q6IQ49</id>
    </interactant>
    <interactant intactId="EBI-720457">
        <id>Q96EW2</id>
        <label>HSPBAP1</label>
    </interactant>
    <organismsDiffer>false</organismsDiffer>
    <experiments>2</experiments>
</comment>
<comment type="subcellular location">
    <subcellularLocation>
        <location evidence="6 8">Nucleus</location>
    </subcellularLocation>
    <subcellularLocation>
        <location evidence="8">Cytoplasm</location>
    </subcellularLocation>
</comment>
<comment type="alternative products">
    <event type="alternative splicing"/>
    <isoform>
        <id>Q6IQ49-1</id>
        <name>1</name>
        <sequence type="displayed"/>
    </isoform>
    <isoform>
        <id>Q6IQ49-2</id>
        <name>2</name>
        <sequence type="described" ref="VSP_024982"/>
    </isoform>
    <isoform>
        <id>Q6IQ49-3</id>
        <name>3</name>
        <sequence type="described" ref="VSP_024981"/>
    </isoform>
</comment>
<comment type="tissue specificity">
    <text evidence="8">Ubiquitously expressed; enriched in brain, lung and liver.</text>
</comment>
<comment type="domain">
    <text evidence="6">The PIP-box (PCNA interacting peptide) motif mediates both the interaction with PCNA and cleavage of the SDE2 precursor by a deubiquitinating enzyme.</text>
</comment>
<comment type="domain">
    <text evidence="11">The SAP domain is necessary for specific binding to DNA.</text>
</comment>
<comment type="domain">
    <text evidence="11">The propeptide displays a ubiquitin-like fold.</text>
</comment>
<comment type="PTM">
    <text evidence="6 7">Upon binding to PCNA, the N-terminal UBL (ubiquitin-like) propeptide is cleaved at Gly-77 by an unidentified deubiquitinating enzyme; the resulting mature SDE2 is degraded by the DCX(DTL) complex in a cell cycle- and DNA damage dependent manner.</text>
</comment>
<comment type="PTM">
    <text evidence="6">Both SDE2-UBL and the mature SDE2 are polyubiquitinated.</text>
</comment>
<comment type="similarity">
    <text evidence="10">Belongs to the SDE2 family.</text>
</comment>
<dbReference type="EMBL" id="AK092701">
    <property type="protein sequence ID" value="BAC03952.1"/>
    <property type="molecule type" value="mRNA"/>
</dbReference>
<dbReference type="EMBL" id="AK127780">
    <property type="protein sequence ID" value="BAC87130.1"/>
    <property type="molecule type" value="mRNA"/>
</dbReference>
<dbReference type="EMBL" id="AK291008">
    <property type="protein sequence ID" value="BAF83697.1"/>
    <property type="molecule type" value="mRNA"/>
</dbReference>
<dbReference type="EMBL" id="AL133288">
    <property type="status" value="NOT_ANNOTATED_CDS"/>
    <property type="molecule type" value="Genomic_DNA"/>
</dbReference>
<dbReference type="EMBL" id="CH471098">
    <property type="protein sequence ID" value="EAW69769.1"/>
    <property type="molecule type" value="Genomic_DNA"/>
</dbReference>
<dbReference type="EMBL" id="BC071563">
    <property type="protein sequence ID" value="AAH71563.1"/>
    <property type="molecule type" value="mRNA"/>
</dbReference>
<dbReference type="CCDS" id="CCDS41473.1">
    <molecule id="Q6IQ49-1"/>
</dbReference>
<dbReference type="RefSeq" id="NP_689821.3">
    <molecule id="Q6IQ49-1"/>
    <property type="nucleotide sequence ID" value="NM_152608.3"/>
</dbReference>
<dbReference type="PDB" id="6QDV">
    <property type="method" value="EM"/>
    <property type="resolution" value="3.30 A"/>
    <property type="chains" value="z=93-126"/>
</dbReference>
<dbReference type="PDB" id="7N99">
    <property type="method" value="NMR"/>
    <property type="chains" value="A=380-451"/>
</dbReference>
<dbReference type="PDB" id="8C6J">
    <property type="method" value="EM"/>
    <property type="resolution" value="2.80 A"/>
    <property type="chains" value="z=1-451"/>
</dbReference>
<dbReference type="PDB" id="8RO2">
    <property type="method" value="EM"/>
    <property type="resolution" value="3.50 A"/>
    <property type="chains" value="z=1-451"/>
</dbReference>
<dbReference type="PDB" id="9FMD">
    <property type="method" value="EM"/>
    <property type="resolution" value="3.30 A"/>
    <property type="chains" value="X=1-451"/>
</dbReference>
<dbReference type="PDBsum" id="6QDV"/>
<dbReference type="PDBsum" id="7N99"/>
<dbReference type="PDBsum" id="8C6J"/>
<dbReference type="PDBsum" id="8RO2"/>
<dbReference type="PDBsum" id="9FMD"/>
<dbReference type="EMDB" id="EMD-16452"/>
<dbReference type="EMDB" id="EMD-19399"/>
<dbReference type="EMDB" id="EMD-4525"/>
<dbReference type="SMR" id="Q6IQ49"/>
<dbReference type="BioGRID" id="127881">
    <property type="interactions" value="41"/>
</dbReference>
<dbReference type="FunCoup" id="Q6IQ49">
    <property type="interactions" value="4198"/>
</dbReference>
<dbReference type="IntAct" id="Q6IQ49">
    <property type="interactions" value="15"/>
</dbReference>
<dbReference type="MINT" id="Q6IQ49"/>
<dbReference type="STRING" id="9606.ENSP00000272091"/>
<dbReference type="GlyCosmos" id="Q6IQ49">
    <property type="glycosylation" value="1 site, 1 glycan"/>
</dbReference>
<dbReference type="GlyGen" id="Q6IQ49">
    <property type="glycosylation" value="3 sites, 1 O-linked glycan (2 sites)"/>
</dbReference>
<dbReference type="iPTMnet" id="Q6IQ49"/>
<dbReference type="MetOSite" id="Q6IQ49"/>
<dbReference type="PhosphoSitePlus" id="Q6IQ49"/>
<dbReference type="SwissPalm" id="Q6IQ49"/>
<dbReference type="BioMuta" id="SDE2"/>
<dbReference type="DMDM" id="74748828"/>
<dbReference type="jPOST" id="Q6IQ49"/>
<dbReference type="MassIVE" id="Q6IQ49"/>
<dbReference type="PaxDb" id="9606-ENSP00000272091"/>
<dbReference type="PeptideAtlas" id="Q6IQ49"/>
<dbReference type="ProteomicsDB" id="66484">
    <molecule id="Q6IQ49-1"/>
</dbReference>
<dbReference type="ProteomicsDB" id="66485">
    <molecule id="Q6IQ49-2"/>
</dbReference>
<dbReference type="ProteomicsDB" id="66486">
    <molecule id="Q6IQ49-3"/>
</dbReference>
<dbReference type="Pumba" id="Q6IQ49"/>
<dbReference type="Antibodypedia" id="34648">
    <property type="antibodies" value="104 antibodies from 17 providers"/>
</dbReference>
<dbReference type="DNASU" id="163859"/>
<dbReference type="Ensembl" id="ENST00000272091.8">
    <molecule id="Q6IQ49-1"/>
    <property type="protein sequence ID" value="ENSP00000272091.7"/>
    <property type="gene ID" value="ENSG00000143751.10"/>
</dbReference>
<dbReference type="GeneID" id="163859"/>
<dbReference type="KEGG" id="hsa:163859"/>
<dbReference type="MANE-Select" id="ENST00000272091.8">
    <property type="protein sequence ID" value="ENSP00000272091.7"/>
    <property type="RefSeq nucleotide sequence ID" value="NM_152608.4"/>
    <property type="RefSeq protein sequence ID" value="NP_689821.3"/>
</dbReference>
<dbReference type="UCSC" id="uc001hpu.5">
    <molecule id="Q6IQ49-1"/>
    <property type="organism name" value="human"/>
</dbReference>
<dbReference type="AGR" id="HGNC:26643"/>
<dbReference type="CTD" id="163859"/>
<dbReference type="GeneCards" id="SDE2"/>
<dbReference type="HGNC" id="HGNC:26643">
    <property type="gene designation" value="SDE2"/>
</dbReference>
<dbReference type="HPA" id="ENSG00000143751">
    <property type="expression patterns" value="Low tissue specificity"/>
</dbReference>
<dbReference type="MIM" id="620743">
    <property type="type" value="gene"/>
</dbReference>
<dbReference type="neXtProt" id="NX_Q6IQ49"/>
<dbReference type="OpenTargets" id="ENSG00000143751"/>
<dbReference type="PharmGKB" id="PA142672506"/>
<dbReference type="VEuPathDB" id="HostDB:ENSG00000143751"/>
<dbReference type="eggNOG" id="KOG2827">
    <property type="taxonomic scope" value="Eukaryota"/>
</dbReference>
<dbReference type="GeneTree" id="ENSGT00530000063402"/>
<dbReference type="HOGENOM" id="CLU_042333_0_0_1"/>
<dbReference type="InParanoid" id="Q6IQ49"/>
<dbReference type="OMA" id="CFWTGLE"/>
<dbReference type="OrthoDB" id="547031at2759"/>
<dbReference type="PAN-GO" id="Q6IQ49">
    <property type="GO annotations" value="1 GO annotation based on evolutionary models"/>
</dbReference>
<dbReference type="PhylomeDB" id="Q6IQ49"/>
<dbReference type="TreeFam" id="TF314323"/>
<dbReference type="PathwayCommons" id="Q6IQ49"/>
<dbReference type="Reactome" id="R-HSA-72163">
    <property type="pathway name" value="mRNA Splicing - Major Pathway"/>
</dbReference>
<dbReference type="SignaLink" id="Q6IQ49"/>
<dbReference type="SIGNOR" id="Q6IQ49"/>
<dbReference type="BioGRID-ORCS" id="163859">
    <property type="hits" value="801 hits in 1156 CRISPR screens"/>
</dbReference>
<dbReference type="ChiTaRS" id="SDE2">
    <property type="organism name" value="human"/>
</dbReference>
<dbReference type="GenomeRNAi" id="163859"/>
<dbReference type="Pharos" id="Q6IQ49">
    <property type="development level" value="Tbio"/>
</dbReference>
<dbReference type="PRO" id="PR:Q6IQ49"/>
<dbReference type="Proteomes" id="UP000005640">
    <property type="component" value="Chromosome 1"/>
</dbReference>
<dbReference type="RNAct" id="Q6IQ49">
    <property type="molecule type" value="protein"/>
</dbReference>
<dbReference type="Bgee" id="ENSG00000143751">
    <property type="expression patterns" value="Expressed in secondary oocyte and 193 other cell types or tissues"/>
</dbReference>
<dbReference type="GO" id="GO:0005737">
    <property type="term" value="C:cytoplasm"/>
    <property type="evidence" value="ECO:0000314"/>
    <property type="project" value="UniProtKB"/>
</dbReference>
<dbReference type="GO" id="GO:0005829">
    <property type="term" value="C:cytosol"/>
    <property type="evidence" value="ECO:0000314"/>
    <property type="project" value="HPA"/>
</dbReference>
<dbReference type="GO" id="GO:0005794">
    <property type="term" value="C:Golgi apparatus"/>
    <property type="evidence" value="ECO:0000314"/>
    <property type="project" value="HPA"/>
</dbReference>
<dbReference type="GO" id="GO:0005739">
    <property type="term" value="C:mitochondrion"/>
    <property type="evidence" value="ECO:0006056"/>
    <property type="project" value="FlyBase"/>
</dbReference>
<dbReference type="GO" id="GO:0016607">
    <property type="term" value="C:nuclear speck"/>
    <property type="evidence" value="ECO:0000314"/>
    <property type="project" value="HPA"/>
</dbReference>
<dbReference type="GO" id="GO:0005654">
    <property type="term" value="C:nucleoplasm"/>
    <property type="evidence" value="ECO:0000314"/>
    <property type="project" value="HPA"/>
</dbReference>
<dbReference type="GO" id="GO:0005634">
    <property type="term" value="C:nucleus"/>
    <property type="evidence" value="ECO:0000314"/>
    <property type="project" value="UniProtKB"/>
</dbReference>
<dbReference type="GO" id="GO:0005886">
    <property type="term" value="C:plasma membrane"/>
    <property type="evidence" value="ECO:0000314"/>
    <property type="project" value="HPA"/>
</dbReference>
<dbReference type="GO" id="GO:0003684">
    <property type="term" value="F:damaged DNA binding"/>
    <property type="evidence" value="ECO:0000314"/>
    <property type="project" value="UniProtKB"/>
</dbReference>
<dbReference type="GO" id="GO:0030515">
    <property type="term" value="F:snoRNA binding"/>
    <property type="evidence" value="ECO:0000314"/>
    <property type="project" value="UniProtKB"/>
</dbReference>
<dbReference type="GO" id="GO:0051301">
    <property type="term" value="P:cell division"/>
    <property type="evidence" value="ECO:0007669"/>
    <property type="project" value="UniProtKB-KW"/>
</dbReference>
<dbReference type="GO" id="GO:0034644">
    <property type="term" value="P:cellular response to UV"/>
    <property type="evidence" value="ECO:0000314"/>
    <property type="project" value="UniProtKB"/>
</dbReference>
<dbReference type="GO" id="GO:0006260">
    <property type="term" value="P:DNA replication"/>
    <property type="evidence" value="ECO:0007669"/>
    <property type="project" value="UniProtKB-KW"/>
</dbReference>
<dbReference type="GO" id="GO:0000479">
    <property type="term" value="P:endonucleolytic cleavage of tricistronic rRNA transcript (SSU-rRNA, 5.8S rRNA, LSU-rRNA)"/>
    <property type="evidence" value="ECO:0000315"/>
    <property type="project" value="UniProtKB"/>
</dbReference>
<dbReference type="GO" id="GO:0031571">
    <property type="term" value="P:mitotic G1 DNA damage checkpoint signaling"/>
    <property type="evidence" value="ECO:0000314"/>
    <property type="project" value="UniProtKB"/>
</dbReference>
<dbReference type="GO" id="GO:0045292">
    <property type="term" value="P:mRNA cis splicing, via spliceosome"/>
    <property type="evidence" value="ECO:0000315"/>
    <property type="project" value="UniProtKB"/>
</dbReference>
<dbReference type="GO" id="GO:0016485">
    <property type="term" value="P:protein processing"/>
    <property type="evidence" value="ECO:0000314"/>
    <property type="project" value="UniProtKB"/>
</dbReference>
<dbReference type="GO" id="GO:0016567">
    <property type="term" value="P:protein ubiquitination"/>
    <property type="evidence" value="ECO:0000314"/>
    <property type="project" value="UniProtKB"/>
</dbReference>
<dbReference type="InterPro" id="IPR051421">
    <property type="entry name" value="RNA_Proc_DNA_Dmg_Regulator"/>
</dbReference>
<dbReference type="InterPro" id="IPR053822">
    <property type="entry name" value="SDE2-like_dom"/>
</dbReference>
<dbReference type="InterPro" id="IPR025086">
    <property type="entry name" value="SDE2/SF3A3_SAP"/>
</dbReference>
<dbReference type="InterPro" id="IPR053821">
    <property type="entry name" value="Sde2_Ubi"/>
</dbReference>
<dbReference type="PANTHER" id="PTHR12786">
    <property type="entry name" value="SPLICING FACTOR SF3A-RELATED"/>
    <property type="match status" value="1"/>
</dbReference>
<dbReference type="PANTHER" id="PTHR12786:SF1">
    <property type="entry name" value="SPLICING REGULATOR SDE2"/>
    <property type="match status" value="1"/>
</dbReference>
<dbReference type="Pfam" id="PF22782">
    <property type="entry name" value="SDE2"/>
    <property type="match status" value="1"/>
</dbReference>
<dbReference type="Pfam" id="PF13297">
    <property type="entry name" value="SDE2_2C"/>
    <property type="match status" value="1"/>
</dbReference>
<dbReference type="Pfam" id="PF22781">
    <property type="entry name" value="Sde2_N_Ubi_vert"/>
    <property type="match status" value="1"/>
</dbReference>
<name>SDE2_HUMAN</name>
<keyword id="KW-0002">3D-structure</keyword>
<keyword id="KW-0025">Alternative splicing</keyword>
<keyword id="KW-0131">Cell cycle</keyword>
<keyword id="KW-0132">Cell division</keyword>
<keyword id="KW-0175">Coiled coil</keyword>
<keyword id="KW-0963">Cytoplasm</keyword>
<keyword id="KW-0235">DNA replication</keyword>
<keyword id="KW-0238">DNA-binding</keyword>
<keyword id="KW-0498">Mitosis</keyword>
<keyword id="KW-0507">mRNA processing</keyword>
<keyword id="KW-0508">mRNA splicing</keyword>
<keyword id="KW-0539">Nucleus</keyword>
<keyword id="KW-0597">Phosphoprotein</keyword>
<keyword id="KW-1267">Proteomics identification</keyword>
<keyword id="KW-1185">Reference proteome</keyword>
<keyword id="KW-0690">Ribosome biogenesis</keyword>
<keyword id="KW-0694">RNA-binding</keyword>
<keyword id="KW-0832">Ubl conjugation</keyword>
<proteinExistence type="evidence at protein level"/>
<protein>
    <recommendedName>
        <fullName evidence="10">Splicing regulator SDE2</fullName>
    </recommendedName>
    <alternativeName>
        <fullName evidence="10">Replication stress response regulator SDE2</fullName>
    </alternativeName>
</protein>
<sequence length="451" mass="49742">MAEAAALVWIRGPGFGCKAVRCASGRCTVRDFIHRHCQDQNVPVENFFVKCNGALINTSDTVQHGAVYSLEPRLCGGKGGFGSMLRALGAQIEKTTNREACRDLSGRRLRDVNHEKAMAEWVKQQAEREAEKEQKRLERLQRKLVEPKHCFTSPDYQQQCHEMAERLEDSVLKGMQAASSKMVSAEISENRKRQWPTKSQTDRGASAGKRRCFWLGMEGLETAEGSNSESSDDDSEEAPSTSGMGFHAPKIGSNGVEMAAKFPSGSQRARVVNTDHGSPEQLQIPVTDSGRHILEDSCAELGESKEHMESRMVTETEETQEKKAESKEPIEEEPTGAGLNKDKETEERTDGERVAEVAPEERENVAVAKLQESQPGNAVIDKETIDLLAFTSVAELELLGLEKLKCELMALGLKCGGTLQERAARLFSVRGLAKEQIDPALFAKPLKGKKK</sequence>
<feature type="propeptide" id="PRO_0000442521" description="UBL" evidence="11 12">
    <location>
        <begin position="1"/>
        <end position="77"/>
    </location>
</feature>
<feature type="chain" id="PRO_0000286084" description="Splicing regulator SDE2">
    <location>
        <begin position="78"/>
        <end position="451"/>
    </location>
</feature>
<feature type="domain" description="SAP" evidence="11">
    <location>
        <begin position="396"/>
        <end position="430"/>
    </location>
</feature>
<feature type="region of interest" description="Disordered" evidence="5">
    <location>
        <begin position="182"/>
        <end position="208"/>
    </location>
</feature>
<feature type="region of interest" description="Disordered" evidence="5">
    <location>
        <begin position="222"/>
        <end position="362"/>
    </location>
</feature>
<feature type="coiled-coil region" evidence="4">
    <location>
        <begin position="109"/>
        <end position="149"/>
    </location>
</feature>
<feature type="short sequence motif" description="PIP-box" evidence="11">
    <location>
        <begin position="39"/>
        <end position="52"/>
    </location>
</feature>
<feature type="compositionally biased region" description="Basic and acidic residues" evidence="5">
    <location>
        <begin position="302"/>
        <end position="329"/>
    </location>
</feature>
<feature type="compositionally biased region" description="Basic and acidic residues" evidence="5">
    <location>
        <begin position="340"/>
        <end position="362"/>
    </location>
</feature>
<feature type="site" description="Cleavage" evidence="6">
    <location>
        <begin position="77"/>
        <end position="78"/>
    </location>
</feature>
<feature type="modified residue" description="Phosphoserine" evidence="3">
    <location>
        <position position="266"/>
    </location>
</feature>
<feature type="modified residue" description="Phosphothreonine" evidence="17">
    <location>
        <position position="274"/>
    </location>
</feature>
<feature type="modified residue" description="Phosphoserine" evidence="14 15 16 17">
    <location>
        <position position="278"/>
    </location>
</feature>
<feature type="modified residue" description="Phosphothreonine" evidence="13">
    <location>
        <position position="319"/>
    </location>
</feature>
<feature type="modified residue" description="Phosphoserine" evidence="2">
    <location>
        <position position="326"/>
    </location>
</feature>
<feature type="splice variant" id="VSP_024981" description="In isoform 3." evidence="9">
    <original>MAEAAALVWIRGPGFGCKAVRCASGRCTVRDFIHRHCQDQNVPVENFFVKCNGALINTSDTVQHGAVYSLEPRLCGGKGGFGSMLRALGAQIEKTTNREACRDLSGRRLRDVNHEKAMAEWVKQQAEREAEKEQKRLERLQR</original>
    <variation>MEHSLTPVTQCSMELFIVWNPDFAVEKEVLDLCSEHLVLRLRRQPIE</variation>
    <location>
        <begin position="1"/>
        <end position="142"/>
    </location>
</feature>
<feature type="splice variant" id="VSP_024982" description="In isoform 2." evidence="9">
    <location>
        <begin position="53"/>
        <end position="64"/>
    </location>
</feature>
<feature type="sequence variant" id="VAR_032068" description="In dbSNP:rs34348128.">
    <original>M</original>
    <variation>I</variation>
    <location>
        <position position="312"/>
    </location>
</feature>
<feature type="mutagenesis site" description="No binding to PCNA; no cleavage at Gly-77." evidence="6">
    <original>FF</original>
    <variation>AA</variation>
    <location>
        <begin position="47"/>
        <end position="48"/>
    </location>
</feature>
<feature type="mutagenesis site" description="No cleavage at Gly-77." evidence="6 7">
    <original>GG</original>
    <variation>AA</variation>
    <location>
        <begin position="76"/>
        <end position="77"/>
    </location>
</feature>
<feature type="mutagenesis site" description="No effect on cleavage at Gly-77." evidence="7">
    <original>K</original>
    <variation>A</variation>
    <location>
        <position position="78"/>
    </location>
</feature>
<feature type="sequence conflict" description="In Ref. 1; BAC87130." evidence="10" ref="1">
    <original>E</original>
    <variation>G</variation>
    <location>
        <position position="162"/>
    </location>
</feature>
<feature type="sequence conflict" description="In Ref. 1; BAC03952." evidence="10" ref="1">
    <original>E</original>
    <variation>D</variation>
    <location>
        <position position="229"/>
    </location>
</feature>
<feature type="helix" evidence="18">
    <location>
        <begin position="394"/>
        <end position="397"/>
    </location>
</feature>
<feature type="helix" evidence="18">
    <location>
        <begin position="402"/>
        <end position="411"/>
    </location>
</feature>
<feature type="helix" evidence="18">
    <location>
        <begin position="419"/>
        <end position="427"/>
    </location>
</feature>
<feature type="turn" evidence="18">
    <location>
        <begin position="428"/>
        <end position="431"/>
    </location>
</feature>
<feature type="helix" evidence="18">
    <location>
        <begin position="434"/>
        <end position="436"/>
    </location>
</feature>
<feature type="turn" evidence="18">
    <location>
        <begin position="439"/>
        <end position="441"/>
    </location>
</feature>